<reference key="1">
    <citation type="journal article" date="2007" name="ISME J.">
        <title>Population level functional diversity in a microbial community revealed by comparative genomic and metagenomic analyses.</title>
        <authorList>
            <person name="Bhaya D."/>
            <person name="Grossman A.R."/>
            <person name="Steunou A.-S."/>
            <person name="Khuri N."/>
            <person name="Cohan F.M."/>
            <person name="Hamamura N."/>
            <person name="Melendrez M.C."/>
            <person name="Bateson M.M."/>
            <person name="Ward D.M."/>
            <person name="Heidelberg J.F."/>
        </authorList>
    </citation>
    <scope>NUCLEOTIDE SEQUENCE [LARGE SCALE GENOMIC DNA]</scope>
    <source>
        <strain>JA-2-3B'a(2-13)</strain>
    </source>
</reference>
<gene>
    <name evidence="1" type="primary">rpsK</name>
    <name evidence="1" type="synonym">rps11</name>
    <name type="ordered locus">CYB_1579</name>
</gene>
<keyword id="KW-1185">Reference proteome</keyword>
<keyword id="KW-0687">Ribonucleoprotein</keyword>
<keyword id="KW-0689">Ribosomal protein</keyword>
<keyword id="KW-0694">RNA-binding</keyword>
<keyword id="KW-0699">rRNA-binding</keyword>
<protein>
    <recommendedName>
        <fullName evidence="1">Small ribosomal subunit protein uS11</fullName>
    </recommendedName>
    <alternativeName>
        <fullName evidence="2">30S ribosomal protein S11</fullName>
    </alternativeName>
</protein>
<accession>Q2JL75</accession>
<evidence type="ECO:0000255" key="1">
    <source>
        <dbReference type="HAMAP-Rule" id="MF_01310"/>
    </source>
</evidence>
<evidence type="ECO:0000305" key="2"/>
<feature type="chain" id="PRO_0000294876" description="Small ribosomal subunit protein uS11">
    <location>
        <begin position="1"/>
        <end position="128"/>
    </location>
</feature>
<organism>
    <name type="scientific">Synechococcus sp. (strain JA-2-3B'a(2-13))</name>
    <name type="common">Cyanobacteria bacterium Yellowstone B-Prime</name>
    <dbReference type="NCBI Taxonomy" id="321332"/>
    <lineage>
        <taxon>Bacteria</taxon>
        <taxon>Bacillati</taxon>
        <taxon>Cyanobacteriota</taxon>
        <taxon>Cyanophyceae</taxon>
        <taxon>Synechococcales</taxon>
        <taxon>Synechococcaceae</taxon>
        <taxon>Synechococcus</taxon>
    </lineage>
</organism>
<proteinExistence type="inferred from homology"/>
<name>RS11_SYNJB</name>
<sequence>MARQQRRGRKVKKNIPNGVAYIQSTFNNTIVTITDPNGDVVSWASAGSTGFKGAKKGTPFAAQMAAESAARQAMENGMRQIEVMVSGPGAGRETAIRALQATGLEITLIRDITPIPHNGCRPPKRRRV</sequence>
<comment type="function">
    <text evidence="1">Located on the platform of the 30S subunit, it bridges several disparate RNA helices of the 16S rRNA. Forms part of the Shine-Dalgarno cleft in the 70S ribosome.</text>
</comment>
<comment type="subunit">
    <text evidence="1">Part of the 30S ribosomal subunit. Interacts with proteins S7 and S18. Binds to IF-3.</text>
</comment>
<comment type="similarity">
    <text evidence="1">Belongs to the universal ribosomal protein uS11 family.</text>
</comment>
<dbReference type="EMBL" id="CP000240">
    <property type="protein sequence ID" value="ABD02543.1"/>
    <property type="molecule type" value="Genomic_DNA"/>
</dbReference>
<dbReference type="RefSeq" id="WP_011433189.1">
    <property type="nucleotide sequence ID" value="NC_007776.1"/>
</dbReference>
<dbReference type="SMR" id="Q2JL75"/>
<dbReference type="STRING" id="321332.CYB_1579"/>
<dbReference type="KEGG" id="cyb:CYB_1579"/>
<dbReference type="eggNOG" id="COG0100">
    <property type="taxonomic scope" value="Bacteria"/>
</dbReference>
<dbReference type="HOGENOM" id="CLU_072439_5_0_3"/>
<dbReference type="OrthoDB" id="9806415at2"/>
<dbReference type="Proteomes" id="UP000001938">
    <property type="component" value="Chromosome"/>
</dbReference>
<dbReference type="GO" id="GO:1990904">
    <property type="term" value="C:ribonucleoprotein complex"/>
    <property type="evidence" value="ECO:0007669"/>
    <property type="project" value="UniProtKB-KW"/>
</dbReference>
<dbReference type="GO" id="GO:0005840">
    <property type="term" value="C:ribosome"/>
    <property type="evidence" value="ECO:0007669"/>
    <property type="project" value="UniProtKB-KW"/>
</dbReference>
<dbReference type="GO" id="GO:0019843">
    <property type="term" value="F:rRNA binding"/>
    <property type="evidence" value="ECO:0007669"/>
    <property type="project" value="UniProtKB-UniRule"/>
</dbReference>
<dbReference type="GO" id="GO:0003735">
    <property type="term" value="F:structural constituent of ribosome"/>
    <property type="evidence" value="ECO:0007669"/>
    <property type="project" value="InterPro"/>
</dbReference>
<dbReference type="GO" id="GO:0006412">
    <property type="term" value="P:translation"/>
    <property type="evidence" value="ECO:0007669"/>
    <property type="project" value="UniProtKB-UniRule"/>
</dbReference>
<dbReference type="FunFam" id="3.30.420.80:FF:000001">
    <property type="entry name" value="30S ribosomal protein S11"/>
    <property type="match status" value="1"/>
</dbReference>
<dbReference type="Gene3D" id="3.30.420.80">
    <property type="entry name" value="Ribosomal protein S11"/>
    <property type="match status" value="1"/>
</dbReference>
<dbReference type="HAMAP" id="MF_01310">
    <property type="entry name" value="Ribosomal_uS11"/>
    <property type="match status" value="1"/>
</dbReference>
<dbReference type="InterPro" id="IPR001971">
    <property type="entry name" value="Ribosomal_uS11"/>
</dbReference>
<dbReference type="InterPro" id="IPR019981">
    <property type="entry name" value="Ribosomal_uS11_bac-type"/>
</dbReference>
<dbReference type="InterPro" id="IPR018102">
    <property type="entry name" value="Ribosomal_uS11_CS"/>
</dbReference>
<dbReference type="InterPro" id="IPR036967">
    <property type="entry name" value="Ribosomal_uS11_sf"/>
</dbReference>
<dbReference type="NCBIfam" id="NF003698">
    <property type="entry name" value="PRK05309.1"/>
    <property type="match status" value="1"/>
</dbReference>
<dbReference type="NCBIfam" id="TIGR03632">
    <property type="entry name" value="uS11_bact"/>
    <property type="match status" value="1"/>
</dbReference>
<dbReference type="PANTHER" id="PTHR11759">
    <property type="entry name" value="40S RIBOSOMAL PROTEIN S14/30S RIBOSOMAL PROTEIN S11"/>
    <property type="match status" value="1"/>
</dbReference>
<dbReference type="Pfam" id="PF00411">
    <property type="entry name" value="Ribosomal_S11"/>
    <property type="match status" value="1"/>
</dbReference>
<dbReference type="PIRSF" id="PIRSF002131">
    <property type="entry name" value="Ribosomal_S11"/>
    <property type="match status" value="1"/>
</dbReference>
<dbReference type="SUPFAM" id="SSF53137">
    <property type="entry name" value="Translational machinery components"/>
    <property type="match status" value="1"/>
</dbReference>
<dbReference type="PROSITE" id="PS00054">
    <property type="entry name" value="RIBOSOMAL_S11"/>
    <property type="match status" value="1"/>
</dbReference>